<evidence type="ECO:0000250" key="1"/>
<evidence type="ECO:0000255" key="2"/>
<evidence type="ECO:0000305" key="3"/>
<accession>Q5HZ97</accession>
<protein>
    <recommendedName>
        <fullName>Transcription elongation factor SPT4</fullName>
    </recommendedName>
    <alternativeName>
        <fullName>DRB sensitivity-inducing factor small subunit</fullName>
        <shortName>DSIF small subunit</shortName>
    </alternativeName>
</protein>
<name>SPT4H_XENLA</name>
<gene>
    <name type="primary">supt4h1</name>
</gene>
<comment type="function">
    <text evidence="1">May function as a component of the DRB sensitivity-inducing factor complex (DSIF complex), which regulates transcription elongation by RNA polymerase II. Probably enhances transcriptional pausing at sites proximal to the promoter, which may in turn facilitate the assembly of an elongation competent RNA polymerase II complex (By similarity).</text>
</comment>
<comment type="subunit">
    <text evidence="1">Interacts with SUPT5H to form the DSIF complex. DSIF interacts with RNA polymerase II and with the positive transcription elongation factor b complex (P-TEFb complex), which is composed of CDK9 and cyclin-T (By similarity).</text>
</comment>
<comment type="subcellular location">
    <subcellularLocation>
        <location evidence="1">Nucleus</location>
    </subcellularLocation>
</comment>
<comment type="similarity">
    <text evidence="3">Belongs to the SPT4 family.</text>
</comment>
<sequence length="117" mass="13221">MALETVPKDLRHLRACLLCSLVKTIDQFEYDGCDNCDAYLQMKGNREMVYDCTSSSFDGIVAMMSPDDSWVSKWQRITNFKPGVYAVSVTGRLPQGIVRELKSRGVVYKSRDTAIKT</sequence>
<organism>
    <name type="scientific">Xenopus laevis</name>
    <name type="common">African clawed frog</name>
    <dbReference type="NCBI Taxonomy" id="8355"/>
    <lineage>
        <taxon>Eukaryota</taxon>
        <taxon>Metazoa</taxon>
        <taxon>Chordata</taxon>
        <taxon>Craniata</taxon>
        <taxon>Vertebrata</taxon>
        <taxon>Euteleostomi</taxon>
        <taxon>Amphibia</taxon>
        <taxon>Batrachia</taxon>
        <taxon>Anura</taxon>
        <taxon>Pipoidea</taxon>
        <taxon>Pipidae</taxon>
        <taxon>Xenopodinae</taxon>
        <taxon>Xenopus</taxon>
        <taxon>Xenopus</taxon>
    </lineage>
</organism>
<proteinExistence type="inferred from homology"/>
<keyword id="KW-0010">Activator</keyword>
<keyword id="KW-0479">Metal-binding</keyword>
<keyword id="KW-0539">Nucleus</keyword>
<keyword id="KW-1185">Reference proteome</keyword>
<keyword id="KW-0678">Repressor</keyword>
<keyword id="KW-0804">Transcription</keyword>
<keyword id="KW-0805">Transcription regulation</keyword>
<keyword id="KW-0862">Zinc</keyword>
<keyword id="KW-0863">Zinc-finger</keyword>
<dbReference type="EMBL" id="BC089123">
    <property type="protein sequence ID" value="AAH89123.1"/>
    <property type="molecule type" value="mRNA"/>
</dbReference>
<dbReference type="RefSeq" id="NP_001089206.1">
    <property type="nucleotide sequence ID" value="NM_001095737.1"/>
</dbReference>
<dbReference type="SMR" id="Q5HZ97"/>
<dbReference type="DNASU" id="734253"/>
<dbReference type="GeneID" id="734253"/>
<dbReference type="KEGG" id="xla:108709324"/>
<dbReference type="KEGG" id="xla:734253"/>
<dbReference type="AGR" id="Xenbase:XB-GENE-977396"/>
<dbReference type="CTD" id="108709324"/>
<dbReference type="CTD" id="734253"/>
<dbReference type="Xenbase" id="XB-GENE-977396">
    <property type="gene designation" value="supt4h1.L"/>
</dbReference>
<dbReference type="OMA" id="WACLLCS"/>
<dbReference type="OrthoDB" id="248751at2759"/>
<dbReference type="Proteomes" id="UP000186698">
    <property type="component" value="Chromosome 2L"/>
</dbReference>
<dbReference type="Proteomes" id="UP000186698">
    <property type="component" value="Chromosome 2S"/>
</dbReference>
<dbReference type="Bgee" id="108709324">
    <property type="expression patterns" value="Expressed in oocyte and 19 other cell types or tissues"/>
</dbReference>
<dbReference type="GO" id="GO:0032044">
    <property type="term" value="C:DSIF complex"/>
    <property type="evidence" value="ECO:0000250"/>
    <property type="project" value="UniProtKB"/>
</dbReference>
<dbReference type="GO" id="GO:0000993">
    <property type="term" value="F:RNA polymerase II complex binding"/>
    <property type="evidence" value="ECO:0000318"/>
    <property type="project" value="GO_Central"/>
</dbReference>
<dbReference type="GO" id="GO:0008270">
    <property type="term" value="F:zinc ion binding"/>
    <property type="evidence" value="ECO:0007669"/>
    <property type="project" value="UniProtKB-KW"/>
</dbReference>
<dbReference type="GO" id="GO:0006355">
    <property type="term" value="P:regulation of DNA-templated transcription"/>
    <property type="evidence" value="ECO:0007669"/>
    <property type="project" value="InterPro"/>
</dbReference>
<dbReference type="GO" id="GO:0006368">
    <property type="term" value="P:transcription elongation by RNA polymerase II"/>
    <property type="evidence" value="ECO:0000318"/>
    <property type="project" value="GO_Central"/>
</dbReference>
<dbReference type="GO" id="GO:0140673">
    <property type="term" value="P:transcription elongation-coupled chromatin remodeling"/>
    <property type="evidence" value="ECO:0007669"/>
    <property type="project" value="InterPro"/>
</dbReference>
<dbReference type="CDD" id="cd07973">
    <property type="entry name" value="Spt4"/>
    <property type="match status" value="1"/>
</dbReference>
<dbReference type="FunFam" id="3.30.40.210:FF:000006">
    <property type="entry name" value="Transcription elongation factor SPT4"/>
    <property type="match status" value="1"/>
</dbReference>
<dbReference type="Gene3D" id="3.30.40.210">
    <property type="match status" value="1"/>
</dbReference>
<dbReference type="InterPro" id="IPR029040">
    <property type="entry name" value="RPABC4/Spt4"/>
</dbReference>
<dbReference type="InterPro" id="IPR009287">
    <property type="entry name" value="Spt4"/>
</dbReference>
<dbReference type="InterPro" id="IPR022800">
    <property type="entry name" value="Spt4/RpoE2_Znf"/>
</dbReference>
<dbReference type="InterPro" id="IPR038510">
    <property type="entry name" value="Spt4_sf"/>
</dbReference>
<dbReference type="PANTHER" id="PTHR12882">
    <property type="entry name" value="SUPPRESSOR OF TY 4"/>
    <property type="match status" value="1"/>
</dbReference>
<dbReference type="PANTHER" id="PTHR12882:SF1">
    <property type="entry name" value="TRANSCRIPTION ELONGATION FACTOR SPT4"/>
    <property type="match status" value="1"/>
</dbReference>
<dbReference type="Pfam" id="PF06093">
    <property type="entry name" value="Spt4"/>
    <property type="match status" value="1"/>
</dbReference>
<dbReference type="PIRSF" id="PIRSF025023">
    <property type="entry name" value="Spt4"/>
    <property type="match status" value="1"/>
</dbReference>
<dbReference type="SMART" id="SM01389">
    <property type="entry name" value="Spt4"/>
    <property type="match status" value="1"/>
</dbReference>
<dbReference type="SUPFAM" id="SSF63393">
    <property type="entry name" value="RNA polymerase subunits"/>
    <property type="match status" value="1"/>
</dbReference>
<feature type="chain" id="PRO_0000210331" description="Transcription elongation factor SPT4">
    <location>
        <begin position="1"/>
        <end position="117"/>
    </location>
</feature>
<feature type="zinc finger region" description="C4-type" evidence="2">
    <location>
        <begin position="16"/>
        <end position="36"/>
    </location>
</feature>
<feature type="region of interest" description="Interaction with SUPT5H" evidence="1">
    <location>
        <begin position="1"/>
        <end position="40"/>
    </location>
</feature>
<reference key="1">
    <citation type="submission" date="2005-01" db="EMBL/GenBank/DDBJ databases">
        <authorList>
            <consortium name="NIH - Xenopus Gene Collection (XGC) project"/>
        </authorList>
    </citation>
    <scope>NUCLEOTIDE SEQUENCE [LARGE SCALE MRNA]</scope>
    <source>
        <tissue>Embryo</tissue>
    </source>
</reference>